<comment type="function">
    <text>Part of the SNAPc complex required for the transcription of both RNA polymerase II and III small-nuclear RNA genes. Binds to the proximal sequence element (PSE), a non-TATA-box basal promoter element common to these 2 types of genes. Recruits TBP and BRF2 to the U6 snRNA TATA box.</text>
</comment>
<comment type="subunit">
    <text evidence="2">Part of the SNAPc complex composed of 5 subunits: SNAPC1, SNAPC2, SNAPC3, SNAPC4 and SNAPC5. SNAPC5 interacts with SNAPC4.</text>
</comment>
<comment type="interaction">
    <interactant intactId="EBI-749483">
        <id>O75971</id>
    </interactant>
    <interactant intactId="EBI-3891843">
        <id>Q4VCS5-2</id>
        <label>AMOT</label>
    </interactant>
    <organismsDiffer>false</organismsDiffer>
    <experiments>3</experiments>
</comment>
<comment type="interaction">
    <interactant intactId="EBI-749483">
        <id>O75971</id>
    </interactant>
    <interactant intactId="EBI-10277443">
        <id>Q8WWE8</id>
        <label>CYTH4</label>
    </interactant>
    <organismsDiffer>false</organismsDiffer>
    <experiments>3</experiments>
</comment>
<comment type="interaction">
    <interactant intactId="EBI-749483">
        <id>O75971</id>
    </interactant>
    <interactant intactId="EBI-10173632">
        <id>P35638-2</id>
        <label>DDIT3</label>
    </interactant>
    <organismsDiffer>false</organismsDiffer>
    <experiments>3</experiments>
</comment>
<comment type="interaction">
    <interactant intactId="EBI-749483">
        <id>O75971</id>
    </interactant>
    <interactant intactId="EBI-928842">
        <id>Q9GZM8</id>
        <label>NDEL1</label>
    </interactant>
    <organismsDiffer>false</organismsDiffer>
    <experiments>3</experiments>
</comment>
<comment type="interaction">
    <interactant intactId="EBI-749483">
        <id>O75971</id>
    </interactant>
    <interactant intactId="EBI-372942">
        <id>Q13287</id>
        <label>NMI</label>
    </interactant>
    <organismsDiffer>false</organismsDiffer>
    <experiments>8</experiments>
</comment>
<comment type="interaction">
    <interactant intactId="EBI-749483">
        <id>O75971</id>
    </interactant>
    <interactant intactId="EBI-10190763">
        <id>O94818-2</id>
        <label>NOL4</label>
    </interactant>
    <organismsDiffer>false</organismsDiffer>
    <experiments>3</experiments>
</comment>
<comment type="interaction">
    <interactant intactId="EBI-749483">
        <id>O75971</id>
    </interactant>
    <interactant intactId="EBI-726826">
        <id>Q8NFP7</id>
        <label>NUDT10</label>
    </interactant>
    <organismsDiffer>false</organismsDiffer>
    <experiments>3</experiments>
</comment>
<comment type="interaction">
    <interactant intactId="EBI-749483">
        <id>O75971</id>
    </interactant>
    <interactant intactId="EBI-347978">
        <id>P37198</id>
        <label>NUP62</label>
    </interactant>
    <organismsDiffer>false</organismsDiffer>
    <experiments>3</experiments>
</comment>
<comment type="interaction">
    <interactant intactId="EBI-749483">
        <id>O75971</id>
    </interactant>
    <interactant intactId="EBI-2801093">
        <id>Q5SXM2</id>
        <label>SNAPC4</label>
    </interactant>
    <organismsDiffer>false</organismsDiffer>
    <experiments>3</experiments>
</comment>
<comment type="interaction">
    <interactant intactId="EBI-749483">
        <id>O75971</id>
    </interactant>
    <interactant intactId="EBI-741415">
        <id>O60232</id>
        <label>ZNRD2</label>
    </interactant>
    <organismsDiffer>false</organismsDiffer>
    <experiments>3</experiments>
</comment>
<comment type="interaction">
    <interactant intactId="EBI-12004298">
        <id>O75971-2</id>
    </interactant>
    <interactant intactId="EBI-17286414">
        <id>A2BDD9</id>
        <label>AMOT</label>
    </interactant>
    <organismsDiffer>false</organismsDiffer>
    <experiments>3</experiments>
</comment>
<comment type="interaction">
    <interactant intactId="EBI-12004298">
        <id>O75971-2</id>
    </interactant>
    <interactant intactId="EBI-18172597">
        <id>Q9NXL2-1</id>
        <label>ARHGEF38</label>
    </interactant>
    <organismsDiffer>false</organismsDiffer>
    <experiments>3</experiments>
</comment>
<comment type="interaction">
    <interactant intactId="EBI-12004298">
        <id>O75971-2</id>
    </interactant>
    <interactant intactId="EBI-10229433">
        <id>Q13515</id>
        <label>BFSP2</label>
    </interactant>
    <organismsDiffer>false</organismsDiffer>
    <experiments>3</experiments>
</comment>
<comment type="interaction">
    <interactant intactId="EBI-12004298">
        <id>O75971-2</id>
    </interactant>
    <interactant intactId="EBI-348630">
        <id>P78537</id>
        <label>BLOC1S1</label>
    </interactant>
    <organismsDiffer>false</organismsDiffer>
    <experiments>3</experiments>
</comment>
<comment type="interaction">
    <interactant intactId="EBI-12004298">
        <id>O75971-2</id>
    </interactant>
    <interactant intactId="EBI-11524851">
        <id>Q8NA61-2</id>
        <label>CBY2</label>
    </interactant>
    <organismsDiffer>false</organismsDiffer>
    <experiments>5</experiments>
</comment>
<comment type="interaction">
    <interactant intactId="EBI-12004298">
        <id>O75971-2</id>
    </interactant>
    <interactant intactId="EBI-10181422">
        <id>A0A1B0GWI1</id>
        <label>CCDC196</label>
    </interactant>
    <organismsDiffer>false</organismsDiffer>
    <experiments>3</experiments>
</comment>
<comment type="interaction">
    <interactant intactId="EBI-12004298">
        <id>O75971-2</id>
    </interactant>
    <interactant intactId="EBI-979174">
        <id>Q53HL2</id>
        <label>CDCA8</label>
    </interactant>
    <organismsDiffer>false</organismsDiffer>
    <experiments>3</experiments>
</comment>
<comment type="interaction">
    <interactant intactId="EBI-12004298">
        <id>O75971-2</id>
    </interactant>
    <interactant intactId="EBI-10192698">
        <id>Q02930-3</id>
        <label>CREB5</label>
    </interactant>
    <organismsDiffer>false</organismsDiffer>
    <experiments>3</experiments>
</comment>
<comment type="interaction">
    <interactant intactId="EBI-12004298">
        <id>O75971-2</id>
    </interactant>
    <interactant intactId="EBI-997830">
        <id>Q15438</id>
        <label>CYTH1</label>
    </interactant>
    <organismsDiffer>false</organismsDiffer>
    <experiments>3</experiments>
</comment>
<comment type="interaction">
    <interactant intactId="EBI-12004298">
        <id>O75971-2</id>
    </interactant>
    <interactant intactId="EBI-11748557">
        <id>Q9Y6C2-2</id>
        <label>EMILIN1</label>
    </interactant>
    <organismsDiffer>false</organismsDiffer>
    <experiments>3</experiments>
</comment>
<comment type="interaction">
    <interactant intactId="EBI-12004298">
        <id>O75971-2</id>
    </interactant>
    <interactant intactId="EBI-2870039">
        <id>Q8IZT9</id>
        <label>FAM9C</label>
    </interactant>
    <organismsDiffer>false</organismsDiffer>
    <experiments>3</experiments>
</comment>
<comment type="interaction">
    <interactant intactId="EBI-12004298">
        <id>O75971-2</id>
    </interactant>
    <interactant intactId="EBI-6624741">
        <id>P47211</id>
        <label>GALR1</label>
    </interactant>
    <organismsDiffer>false</organismsDiffer>
    <experiments>3</experiments>
</comment>
<comment type="interaction">
    <interactant intactId="EBI-12004298">
        <id>O75971-2</id>
    </interactant>
    <interactant intactId="EBI-3917143">
        <id>Q5T7V8</id>
        <label>GORAB</label>
    </interactant>
    <organismsDiffer>false</organismsDiffer>
    <experiments>3</experiments>
</comment>
<comment type="interaction">
    <interactant intactId="EBI-12004298">
        <id>O75971-2</id>
    </interactant>
    <interactant intactId="EBI-717919">
        <id>Q4V328</id>
        <label>GRIPAP1</label>
    </interactant>
    <organismsDiffer>false</organismsDiffer>
    <experiments>3</experiments>
</comment>
<comment type="interaction">
    <interactant intactId="EBI-12004298">
        <id>O75971-2</id>
    </interactant>
    <interactant intactId="EBI-713401">
        <id>Q9P0W2</id>
        <label>HMG20B</label>
    </interactant>
    <organismsDiffer>false</organismsDiffer>
    <experiments>3</experiments>
</comment>
<comment type="interaction">
    <interactant intactId="EBI-12004298">
        <id>O75971-2</id>
    </interactant>
    <interactant intactId="EBI-712105">
        <id>Q13352</id>
        <label>ITGB3BP</label>
    </interactant>
    <organismsDiffer>false</organismsDiffer>
    <experiments>3</experiments>
</comment>
<comment type="interaction">
    <interactant intactId="EBI-12004298">
        <id>O75971-2</id>
    </interactant>
    <interactant intactId="EBI-11959475">
        <id>P25791-3</id>
        <label>LMO2</label>
    </interactant>
    <organismsDiffer>false</organismsDiffer>
    <experiments>3</experiments>
</comment>
<comment type="interaction">
    <interactant intactId="EBI-12004298">
        <id>O75971-2</id>
    </interactant>
    <interactant intactId="EBI-12516603">
        <id>Q8WWY6</id>
        <label>MBD3L1</label>
    </interactant>
    <organismsDiffer>false</organismsDiffer>
    <experiments>3</experiments>
</comment>
<comment type="interaction">
    <interactant intactId="EBI-12004298">
        <id>O75971-2</id>
    </interactant>
    <interactant intactId="EBI-348259">
        <id>Q96EZ8</id>
        <label>MCRS1</label>
    </interactant>
    <organismsDiffer>false</organismsDiffer>
    <experiments>3</experiments>
</comment>
<comment type="interaction">
    <interactant intactId="EBI-12004298">
        <id>O75971-2</id>
    </interactant>
    <interactant intactId="EBI-17491620">
        <id>P13349</id>
        <label>MYF5</label>
    </interactant>
    <organismsDiffer>false</organismsDiffer>
    <experiments>3</experiments>
</comment>
<comment type="interaction">
    <interactant intactId="EBI-12004298">
        <id>O75971-2</id>
    </interactant>
    <interactant intactId="EBI-928842">
        <id>Q9GZM8</id>
        <label>NDEL1</label>
    </interactant>
    <organismsDiffer>false</organismsDiffer>
    <experiments>3</experiments>
</comment>
<comment type="interaction">
    <interactant intactId="EBI-12004298">
        <id>O75971-2</id>
    </interactant>
    <interactant intactId="EBI-372942">
        <id>Q13287</id>
        <label>NMI</label>
    </interactant>
    <organismsDiffer>false</organismsDiffer>
    <experiments>3</experiments>
</comment>
<comment type="interaction">
    <interactant intactId="EBI-12004298">
        <id>O75971-2</id>
    </interactant>
    <interactant intactId="EBI-10190763">
        <id>O94818-2</id>
        <label>NOL4</label>
    </interactant>
    <organismsDiffer>false</organismsDiffer>
    <experiments>3</experiments>
</comment>
<comment type="interaction">
    <interactant intactId="EBI-12004298">
        <id>O75971-2</id>
    </interactant>
    <interactant intactId="EBI-394753">
        <id>P52435</id>
        <label>POLR2J</label>
    </interactant>
    <organismsDiffer>false</organismsDiffer>
    <experiments>3</experiments>
</comment>
<comment type="interaction">
    <interactant intactId="EBI-12004298">
        <id>O75971-2</id>
    </interactant>
    <interactant intactId="EBI-2340927">
        <id>P78317</id>
        <label>RNF4</label>
    </interactant>
    <organismsDiffer>false</organismsDiffer>
    <experiments>3</experiments>
</comment>
<comment type="interaction">
    <interactant intactId="EBI-12004298">
        <id>O75971-2</id>
    </interactant>
    <interactant intactId="EBI-12198403">
        <id>Q8WXG8</id>
        <label>S100Z</label>
    </interactant>
    <organismsDiffer>false</organismsDiffer>
    <experiments>3</experiments>
</comment>
<comment type="interaction">
    <interactant intactId="EBI-12004298">
        <id>O75971-2</id>
    </interactant>
    <interactant intactId="EBI-20117546">
        <id>Q9H169-2</id>
        <label>STMN4</label>
    </interactant>
    <organismsDiffer>false</organismsDiffer>
    <experiments>3</experiments>
</comment>
<comment type="interaction">
    <interactant intactId="EBI-12004298">
        <id>O75971-2</id>
    </interactant>
    <interactant intactId="EBI-11961968">
        <id>P0DI81-3</id>
        <label>TRAPPC2</label>
    </interactant>
    <organismsDiffer>false</organismsDiffer>
    <experiments>3</experiments>
</comment>
<comment type="interaction">
    <interactant intactId="EBI-12004298">
        <id>O75971-2</id>
    </interactant>
    <interactant intactId="EBI-6116822">
        <id>Q8N3L3</id>
        <label>TXLNB</label>
    </interactant>
    <organismsDiffer>false</organismsDiffer>
    <experiments>3</experiments>
</comment>
<comment type="interaction">
    <interactant intactId="EBI-12004298">
        <id>O75971-2</id>
    </interactant>
    <interactant intactId="EBI-12272076">
        <id>Q13360-2</id>
        <label>ZNF177</label>
    </interactant>
    <organismsDiffer>false</organismsDiffer>
    <experiments>3</experiments>
</comment>
<comment type="subcellular location">
    <subcellularLocation>
        <location>Nucleus</location>
    </subcellularLocation>
</comment>
<comment type="alternative products">
    <event type="alternative splicing"/>
    <isoform>
        <id>O75971-1</id>
        <name>1</name>
        <sequence type="displayed"/>
    </isoform>
    <isoform>
        <id>O75971-2</id>
        <name>2</name>
        <sequence type="described" ref="VSP_012785"/>
    </isoform>
</comment>
<reference key="1">
    <citation type="journal article" date="1998" name="Genes Dev.">
        <title>SNAP19 mediates the assembly of a functional core promoter complex (SNAPc) shared by RNA polymerases II and III.</title>
        <authorList>
            <person name="Henry R.W."/>
            <person name="Mittal V."/>
            <person name="Ma B."/>
            <person name="Kobayashi R."/>
            <person name="Hernandez N."/>
        </authorList>
    </citation>
    <scope>NUCLEOTIDE SEQUENCE [MRNA] (ISOFORM 1)</scope>
</reference>
<reference key="2">
    <citation type="journal article" date="2004" name="Nat. Genet.">
        <title>Complete sequencing and characterization of 21,243 full-length human cDNAs.</title>
        <authorList>
            <person name="Ota T."/>
            <person name="Suzuki Y."/>
            <person name="Nishikawa T."/>
            <person name="Otsuki T."/>
            <person name="Sugiyama T."/>
            <person name="Irie R."/>
            <person name="Wakamatsu A."/>
            <person name="Hayashi K."/>
            <person name="Sato H."/>
            <person name="Nagai K."/>
            <person name="Kimura K."/>
            <person name="Makita H."/>
            <person name="Sekine M."/>
            <person name="Obayashi M."/>
            <person name="Nishi T."/>
            <person name="Shibahara T."/>
            <person name="Tanaka T."/>
            <person name="Ishii S."/>
            <person name="Yamamoto J."/>
            <person name="Saito K."/>
            <person name="Kawai Y."/>
            <person name="Isono Y."/>
            <person name="Nakamura Y."/>
            <person name="Nagahari K."/>
            <person name="Murakami K."/>
            <person name="Yasuda T."/>
            <person name="Iwayanagi T."/>
            <person name="Wagatsuma M."/>
            <person name="Shiratori A."/>
            <person name="Sudo H."/>
            <person name="Hosoiri T."/>
            <person name="Kaku Y."/>
            <person name="Kodaira H."/>
            <person name="Kondo H."/>
            <person name="Sugawara M."/>
            <person name="Takahashi M."/>
            <person name="Kanda K."/>
            <person name="Yokoi T."/>
            <person name="Furuya T."/>
            <person name="Kikkawa E."/>
            <person name="Omura Y."/>
            <person name="Abe K."/>
            <person name="Kamihara K."/>
            <person name="Katsuta N."/>
            <person name="Sato K."/>
            <person name="Tanikawa M."/>
            <person name="Yamazaki M."/>
            <person name="Ninomiya K."/>
            <person name="Ishibashi T."/>
            <person name="Yamashita H."/>
            <person name="Murakawa K."/>
            <person name="Fujimori K."/>
            <person name="Tanai H."/>
            <person name="Kimata M."/>
            <person name="Watanabe M."/>
            <person name="Hiraoka S."/>
            <person name="Chiba Y."/>
            <person name="Ishida S."/>
            <person name="Ono Y."/>
            <person name="Takiguchi S."/>
            <person name="Watanabe S."/>
            <person name="Yosida M."/>
            <person name="Hotuta T."/>
            <person name="Kusano J."/>
            <person name="Kanehori K."/>
            <person name="Takahashi-Fujii A."/>
            <person name="Hara H."/>
            <person name="Tanase T.-O."/>
            <person name="Nomura Y."/>
            <person name="Togiya S."/>
            <person name="Komai F."/>
            <person name="Hara R."/>
            <person name="Takeuchi K."/>
            <person name="Arita M."/>
            <person name="Imose N."/>
            <person name="Musashino K."/>
            <person name="Yuuki H."/>
            <person name="Oshima A."/>
            <person name="Sasaki N."/>
            <person name="Aotsuka S."/>
            <person name="Yoshikawa Y."/>
            <person name="Matsunawa H."/>
            <person name="Ichihara T."/>
            <person name="Shiohata N."/>
            <person name="Sano S."/>
            <person name="Moriya S."/>
            <person name="Momiyama H."/>
            <person name="Satoh N."/>
            <person name="Takami S."/>
            <person name="Terashima Y."/>
            <person name="Suzuki O."/>
            <person name="Nakagawa S."/>
            <person name="Senoh A."/>
            <person name="Mizoguchi H."/>
            <person name="Goto Y."/>
            <person name="Shimizu F."/>
            <person name="Wakebe H."/>
            <person name="Hishigaki H."/>
            <person name="Watanabe T."/>
            <person name="Sugiyama A."/>
            <person name="Takemoto M."/>
            <person name="Kawakami B."/>
            <person name="Yamazaki M."/>
            <person name="Watanabe K."/>
            <person name="Kumagai A."/>
            <person name="Itakura S."/>
            <person name="Fukuzumi Y."/>
            <person name="Fujimori Y."/>
            <person name="Komiyama M."/>
            <person name="Tashiro H."/>
            <person name="Tanigami A."/>
            <person name="Fujiwara T."/>
            <person name="Ono T."/>
            <person name="Yamada K."/>
            <person name="Fujii Y."/>
            <person name="Ozaki K."/>
            <person name="Hirao M."/>
            <person name="Ohmori Y."/>
            <person name="Kawabata A."/>
            <person name="Hikiji T."/>
            <person name="Kobatake N."/>
            <person name="Inagaki H."/>
            <person name="Ikema Y."/>
            <person name="Okamoto S."/>
            <person name="Okitani R."/>
            <person name="Kawakami T."/>
            <person name="Noguchi S."/>
            <person name="Itoh T."/>
            <person name="Shigeta K."/>
            <person name="Senba T."/>
            <person name="Matsumura K."/>
            <person name="Nakajima Y."/>
            <person name="Mizuno T."/>
            <person name="Morinaga M."/>
            <person name="Sasaki M."/>
            <person name="Togashi T."/>
            <person name="Oyama M."/>
            <person name="Hata H."/>
            <person name="Watanabe M."/>
            <person name="Komatsu T."/>
            <person name="Mizushima-Sugano J."/>
            <person name="Satoh T."/>
            <person name="Shirai Y."/>
            <person name="Takahashi Y."/>
            <person name="Nakagawa K."/>
            <person name="Okumura K."/>
            <person name="Nagase T."/>
            <person name="Nomura N."/>
            <person name="Kikuchi H."/>
            <person name="Masuho Y."/>
            <person name="Yamashita R."/>
            <person name="Nakai K."/>
            <person name="Yada T."/>
            <person name="Nakamura Y."/>
            <person name="Ohara O."/>
            <person name="Isogai T."/>
            <person name="Sugano S."/>
        </authorList>
    </citation>
    <scope>NUCLEOTIDE SEQUENCE [LARGE SCALE MRNA] (ISOFORM 2)</scope>
    <source>
        <tissue>Spleen</tissue>
    </source>
</reference>
<reference key="3">
    <citation type="submission" date="2005-07" db="EMBL/GenBank/DDBJ databases">
        <authorList>
            <person name="Mural R.J."/>
            <person name="Istrail S."/>
            <person name="Sutton G.G."/>
            <person name="Florea L."/>
            <person name="Halpern A.L."/>
            <person name="Mobarry C.M."/>
            <person name="Lippert R."/>
            <person name="Walenz B."/>
            <person name="Shatkay H."/>
            <person name="Dew I."/>
            <person name="Miller J.R."/>
            <person name="Flanigan M.J."/>
            <person name="Edwards N.J."/>
            <person name="Bolanos R."/>
            <person name="Fasulo D."/>
            <person name="Halldorsson B.V."/>
            <person name="Hannenhalli S."/>
            <person name="Turner R."/>
            <person name="Yooseph S."/>
            <person name="Lu F."/>
            <person name="Nusskern D.R."/>
            <person name="Shue B.C."/>
            <person name="Zheng X.H."/>
            <person name="Zhong F."/>
            <person name="Delcher A.L."/>
            <person name="Huson D.H."/>
            <person name="Kravitz S.A."/>
            <person name="Mouchard L."/>
            <person name="Reinert K."/>
            <person name="Remington K.A."/>
            <person name="Clark A.G."/>
            <person name="Waterman M.S."/>
            <person name="Eichler E.E."/>
            <person name="Adams M.D."/>
            <person name="Hunkapiller M.W."/>
            <person name="Myers E.W."/>
            <person name="Venter J.C."/>
        </authorList>
    </citation>
    <scope>NUCLEOTIDE SEQUENCE [LARGE SCALE GENOMIC DNA]</scope>
</reference>
<reference key="4">
    <citation type="journal article" date="2004" name="Genome Res.">
        <title>The status, quality, and expansion of the NIH full-length cDNA project: the Mammalian Gene Collection (MGC).</title>
        <authorList>
            <consortium name="The MGC Project Team"/>
        </authorList>
    </citation>
    <scope>NUCLEOTIDE SEQUENCE [LARGE SCALE MRNA] (ISOFORM 2)</scope>
    <source>
        <tissue>Urinary bladder</tissue>
    </source>
</reference>
<reference key="5">
    <citation type="journal article" date="2001" name="J. Biol. Chem.">
        <title>A map of protein-protein contacts within the small nuclear RNA-activating protein complex SNAPc.</title>
        <authorList>
            <person name="Ma B."/>
            <person name="Hernandez N."/>
        </authorList>
    </citation>
    <scope>INTERACTION WITH SNAPC4</scope>
    <scope>MUTAGENESIS OF LEU-8 AND LEU-18</scope>
</reference>
<reference key="6">
    <citation type="journal article" date="2006" name="Cell">
        <title>Global, in vivo, and site-specific phosphorylation dynamics in signaling networks.</title>
        <authorList>
            <person name="Olsen J.V."/>
            <person name="Blagoev B."/>
            <person name="Gnad F."/>
            <person name="Macek B."/>
            <person name="Kumar C."/>
            <person name="Mortensen P."/>
            <person name="Mann M."/>
        </authorList>
    </citation>
    <scope>IDENTIFICATION BY MASS SPECTROMETRY [LARGE SCALE ANALYSIS]</scope>
    <source>
        <tissue>Cervix carcinoma</tissue>
    </source>
</reference>
<reference key="7">
    <citation type="journal article" date="2008" name="Proc. Natl. Acad. Sci. U.S.A.">
        <title>A quantitative atlas of mitotic phosphorylation.</title>
        <authorList>
            <person name="Dephoure N."/>
            <person name="Zhou C."/>
            <person name="Villen J."/>
            <person name="Beausoleil S.A."/>
            <person name="Bakalarski C.E."/>
            <person name="Elledge S.J."/>
            <person name="Gygi S.P."/>
        </authorList>
    </citation>
    <scope>PHOSPHORYLATION [LARGE SCALE ANALYSIS] AT THR-85</scope>
    <scope>IDENTIFICATION BY MASS SPECTROMETRY [LARGE SCALE ANALYSIS]</scope>
    <source>
        <tissue>Cervix carcinoma</tissue>
    </source>
</reference>
<reference key="8">
    <citation type="journal article" date="2009" name="Sci. Signal.">
        <title>Quantitative phosphoproteomic analysis of T cell receptor signaling reveals system-wide modulation of protein-protein interactions.</title>
        <authorList>
            <person name="Mayya V."/>
            <person name="Lundgren D.H."/>
            <person name="Hwang S.-I."/>
            <person name="Rezaul K."/>
            <person name="Wu L."/>
            <person name="Eng J.K."/>
            <person name="Rodionov V."/>
            <person name="Han D.K."/>
        </authorList>
    </citation>
    <scope>IDENTIFICATION BY MASS SPECTROMETRY [LARGE SCALE ANALYSIS]</scope>
    <source>
        <tissue>Leukemic T-cell</tissue>
    </source>
</reference>
<reference key="9">
    <citation type="journal article" date="2010" name="Sci. Signal.">
        <title>Quantitative phosphoproteomics reveals widespread full phosphorylation site occupancy during mitosis.</title>
        <authorList>
            <person name="Olsen J.V."/>
            <person name="Vermeulen M."/>
            <person name="Santamaria A."/>
            <person name="Kumar C."/>
            <person name="Miller M.L."/>
            <person name="Jensen L.J."/>
            <person name="Gnad F."/>
            <person name="Cox J."/>
            <person name="Jensen T.S."/>
            <person name="Nigg E.A."/>
            <person name="Brunak S."/>
            <person name="Mann M."/>
        </authorList>
    </citation>
    <scope>IDENTIFICATION BY MASS SPECTROMETRY [LARGE SCALE ANALYSIS]</scope>
    <source>
        <tissue>Cervix carcinoma</tissue>
    </source>
</reference>
<proteinExistence type="evidence at protein level"/>
<name>SNPC5_HUMAN</name>
<accession>O75971</accession>
<accession>A8K7N6</accession>
<accession>Q96CF3</accession>
<organism>
    <name type="scientific">Homo sapiens</name>
    <name type="common">Human</name>
    <dbReference type="NCBI Taxonomy" id="9606"/>
    <lineage>
        <taxon>Eukaryota</taxon>
        <taxon>Metazoa</taxon>
        <taxon>Chordata</taxon>
        <taxon>Craniata</taxon>
        <taxon>Vertebrata</taxon>
        <taxon>Euteleostomi</taxon>
        <taxon>Mammalia</taxon>
        <taxon>Eutheria</taxon>
        <taxon>Euarchontoglires</taxon>
        <taxon>Primates</taxon>
        <taxon>Haplorrhini</taxon>
        <taxon>Catarrhini</taxon>
        <taxon>Hominidae</taxon>
        <taxon>Homo</taxon>
    </lineage>
</organism>
<sequence length="98" mass="11328">MLSRLQELRKEEETLLRLKAALHDQLNRLKVEELALQSMISSRRGDEMLSSHTVPEQSHDMLVHVDNEASINQTTLELSTKSHVTEEEEEEEEEESDS</sequence>
<evidence type="ECO:0000256" key="1">
    <source>
        <dbReference type="SAM" id="MobiDB-lite"/>
    </source>
</evidence>
<evidence type="ECO:0000269" key="2">
    <source>
    </source>
</evidence>
<evidence type="ECO:0000303" key="3">
    <source>
    </source>
</evidence>
<evidence type="ECO:0000303" key="4">
    <source>
    </source>
</evidence>
<evidence type="ECO:0007744" key="5">
    <source>
    </source>
</evidence>
<evidence type="ECO:0007829" key="6">
    <source>
        <dbReference type="PDB" id="7ZWC"/>
    </source>
</evidence>
<keyword id="KW-0002">3D-structure</keyword>
<keyword id="KW-0025">Alternative splicing</keyword>
<keyword id="KW-0539">Nucleus</keyword>
<keyword id="KW-0597">Phosphoprotein</keyword>
<keyword id="KW-1267">Proteomics identification</keyword>
<keyword id="KW-1185">Reference proteome</keyword>
<keyword id="KW-0804">Transcription</keyword>
<keyword id="KW-0805">Transcription regulation</keyword>
<dbReference type="EMBL" id="AF093593">
    <property type="protein sequence ID" value="AAC61873.1"/>
    <property type="molecule type" value="mRNA"/>
</dbReference>
<dbReference type="EMBL" id="AK292051">
    <property type="protein sequence ID" value="BAF84740.1"/>
    <property type="molecule type" value="mRNA"/>
</dbReference>
<dbReference type="EMBL" id="CH471082">
    <property type="protein sequence ID" value="EAW77771.1"/>
    <property type="molecule type" value="Genomic_DNA"/>
</dbReference>
<dbReference type="EMBL" id="BC014315">
    <property type="protein sequence ID" value="AAH14315.1"/>
    <property type="molecule type" value="mRNA"/>
</dbReference>
<dbReference type="CCDS" id="CCDS10217.1">
    <molecule id="O75971-1"/>
</dbReference>
<dbReference type="CCDS" id="CCDS86469.1">
    <molecule id="O75971-2"/>
</dbReference>
<dbReference type="RefSeq" id="NP_001316542.1">
    <molecule id="O75971-2"/>
    <property type="nucleotide sequence ID" value="NM_001329613.2"/>
</dbReference>
<dbReference type="RefSeq" id="NP_001316544.1">
    <molecule id="O75971-1"/>
    <property type="nucleotide sequence ID" value="NM_001329615.2"/>
</dbReference>
<dbReference type="RefSeq" id="NP_006040.1">
    <molecule id="O75971-1"/>
    <property type="nucleotide sequence ID" value="NM_006049.4"/>
</dbReference>
<dbReference type="PDB" id="7ZWC">
    <property type="method" value="EM"/>
    <property type="resolution" value="3.20 A"/>
    <property type="chains" value="d=1-98"/>
</dbReference>
<dbReference type="PDB" id="7ZWD">
    <property type="method" value="EM"/>
    <property type="resolution" value="3.00 A"/>
    <property type="chains" value="d=1-98"/>
</dbReference>
<dbReference type="PDB" id="7ZX7">
    <property type="method" value="EM"/>
    <property type="resolution" value="3.40 A"/>
    <property type="chains" value="d=1-98"/>
</dbReference>
<dbReference type="PDB" id="7ZX8">
    <property type="method" value="EM"/>
    <property type="resolution" value="3.00 A"/>
    <property type="chains" value="d=1-98"/>
</dbReference>
<dbReference type="PDB" id="7ZXE">
    <property type="method" value="EM"/>
    <property type="resolution" value="3.50 A"/>
    <property type="chains" value="d=1-98"/>
</dbReference>
<dbReference type="PDBsum" id="7ZWC"/>
<dbReference type="PDBsum" id="7ZWD"/>
<dbReference type="PDBsum" id="7ZX7"/>
<dbReference type="PDBsum" id="7ZX8"/>
<dbReference type="PDBsum" id="7ZXE"/>
<dbReference type="EMDB" id="EMD-14996"/>
<dbReference type="EMDB" id="EMD-14997"/>
<dbReference type="EMDB" id="EMD-15006"/>
<dbReference type="EMDB" id="EMD-15007"/>
<dbReference type="EMDB" id="EMD-15009"/>
<dbReference type="SMR" id="O75971"/>
<dbReference type="BioGRID" id="115590">
    <property type="interactions" value="49"/>
</dbReference>
<dbReference type="ComplexPortal" id="CPX-8637">
    <property type="entry name" value="SNAPc snRNA activating protein complex"/>
</dbReference>
<dbReference type="CORUM" id="O75971"/>
<dbReference type="FunCoup" id="O75971">
    <property type="interactions" value="1467"/>
</dbReference>
<dbReference type="IntAct" id="O75971">
    <property type="interactions" value="41"/>
</dbReference>
<dbReference type="MINT" id="O75971"/>
<dbReference type="STRING" id="9606.ENSP00000319597"/>
<dbReference type="iPTMnet" id="O75971"/>
<dbReference type="PhosphoSitePlus" id="O75971"/>
<dbReference type="BioMuta" id="SNAPC5"/>
<dbReference type="jPOST" id="O75971"/>
<dbReference type="MassIVE" id="O75971"/>
<dbReference type="PaxDb" id="9606-ENSP00000319597"/>
<dbReference type="PeptideAtlas" id="O75971"/>
<dbReference type="ProteomicsDB" id="50333">
    <molecule id="O75971-1"/>
</dbReference>
<dbReference type="ProteomicsDB" id="50334">
    <molecule id="O75971-2"/>
</dbReference>
<dbReference type="Pumba" id="O75971"/>
<dbReference type="Antibodypedia" id="26135">
    <property type="antibodies" value="132 antibodies from 25 providers"/>
</dbReference>
<dbReference type="DNASU" id="10302"/>
<dbReference type="Ensembl" id="ENST00000307979.7">
    <molecule id="O75971-2"/>
    <property type="protein sequence ID" value="ENSP00000308439.7"/>
    <property type="gene ID" value="ENSG00000174446.13"/>
</dbReference>
<dbReference type="Ensembl" id="ENST00000316634.6">
    <molecule id="O75971-1"/>
    <property type="protein sequence ID" value="ENSP00000319597.5"/>
    <property type="gene ID" value="ENSG00000174446.13"/>
</dbReference>
<dbReference type="Ensembl" id="ENST00000395589.6">
    <molecule id="O75971-1"/>
    <property type="protein sequence ID" value="ENSP00000378954.2"/>
    <property type="gene ID" value="ENSG00000174446.13"/>
</dbReference>
<dbReference type="Ensembl" id="ENST00000562411.5">
    <molecule id="O75971-1"/>
    <property type="protein sequence ID" value="ENSP00000454421.1"/>
    <property type="gene ID" value="ENSG00000174446.13"/>
</dbReference>
<dbReference type="Ensembl" id="ENST00000563480.6">
    <molecule id="O75971-1"/>
    <property type="protein sequence ID" value="ENSP00000457892.1"/>
    <property type="gene ID" value="ENSG00000174446.13"/>
</dbReference>
<dbReference type="GeneID" id="10302"/>
<dbReference type="KEGG" id="hsa:10302"/>
<dbReference type="MANE-Select" id="ENST00000316634.6">
    <property type="protein sequence ID" value="ENSP00000319597.5"/>
    <property type="RefSeq nucleotide sequence ID" value="NM_001329615.2"/>
    <property type="RefSeq protein sequence ID" value="NP_001316544.1"/>
</dbReference>
<dbReference type="UCSC" id="uc002apu.2">
    <molecule id="O75971-1"/>
    <property type="organism name" value="human"/>
</dbReference>
<dbReference type="AGR" id="HGNC:15484"/>
<dbReference type="CTD" id="10302"/>
<dbReference type="DisGeNET" id="10302"/>
<dbReference type="GeneCards" id="SNAPC5"/>
<dbReference type="HGNC" id="HGNC:15484">
    <property type="gene designation" value="SNAPC5"/>
</dbReference>
<dbReference type="HPA" id="ENSG00000174446">
    <property type="expression patterns" value="Low tissue specificity"/>
</dbReference>
<dbReference type="MalaCards" id="SNAPC5"/>
<dbReference type="MIM" id="605979">
    <property type="type" value="gene"/>
</dbReference>
<dbReference type="neXtProt" id="NX_O75971"/>
<dbReference type="OpenTargets" id="ENSG00000174446"/>
<dbReference type="PharmGKB" id="PA37967"/>
<dbReference type="VEuPathDB" id="HostDB:ENSG00000174446"/>
<dbReference type="eggNOG" id="ENOG502S8MI">
    <property type="taxonomic scope" value="Eukaryota"/>
</dbReference>
<dbReference type="GeneTree" id="ENSGT00390000010331"/>
<dbReference type="HOGENOM" id="CLU_167684_0_0_1"/>
<dbReference type="InParanoid" id="O75971"/>
<dbReference type="OMA" id="EDPPNIM"/>
<dbReference type="OrthoDB" id="6158499at2759"/>
<dbReference type="PAN-GO" id="O75971">
    <property type="GO annotations" value="0 GO annotations based on evolutionary models"/>
</dbReference>
<dbReference type="PhylomeDB" id="O75971"/>
<dbReference type="TreeFam" id="TF328823"/>
<dbReference type="PathwayCommons" id="O75971"/>
<dbReference type="Reactome" id="R-HSA-6807505">
    <property type="pathway name" value="RNA polymerase II transcribes snRNA genes"/>
</dbReference>
<dbReference type="Reactome" id="R-HSA-749476">
    <property type="pathway name" value="RNA Polymerase III Abortive And Retractive Initiation"/>
</dbReference>
<dbReference type="Reactome" id="R-HSA-76071">
    <property type="pathway name" value="RNA Polymerase III Transcription Initiation From Type 3 Promoter"/>
</dbReference>
<dbReference type="SignaLink" id="O75971"/>
<dbReference type="BioGRID-ORCS" id="10302">
    <property type="hits" value="634 hits in 1164 CRISPR screens"/>
</dbReference>
<dbReference type="ChiTaRS" id="SNAPC5">
    <property type="organism name" value="human"/>
</dbReference>
<dbReference type="GeneWiki" id="SNAPC5"/>
<dbReference type="GenomeRNAi" id="10302"/>
<dbReference type="Pharos" id="O75971">
    <property type="development level" value="Tdark"/>
</dbReference>
<dbReference type="PRO" id="PR:O75971"/>
<dbReference type="Proteomes" id="UP000005640">
    <property type="component" value="Chromosome 15"/>
</dbReference>
<dbReference type="RNAct" id="O75971">
    <property type="molecule type" value="protein"/>
</dbReference>
<dbReference type="Bgee" id="ENSG00000174446">
    <property type="expression patterns" value="Expressed in endothelial cell and 214 other cell types or tissues"/>
</dbReference>
<dbReference type="ExpressionAtlas" id="O75971">
    <property type="expression patterns" value="baseline and differential"/>
</dbReference>
<dbReference type="GO" id="GO:0016604">
    <property type="term" value="C:nuclear body"/>
    <property type="evidence" value="ECO:0000314"/>
    <property type="project" value="HPA"/>
</dbReference>
<dbReference type="GO" id="GO:0005730">
    <property type="term" value="C:nucleolus"/>
    <property type="evidence" value="ECO:0000314"/>
    <property type="project" value="HPA"/>
</dbReference>
<dbReference type="GO" id="GO:0005654">
    <property type="term" value="C:nucleoplasm"/>
    <property type="evidence" value="ECO:0000314"/>
    <property type="project" value="HPA"/>
</dbReference>
<dbReference type="GO" id="GO:0005634">
    <property type="term" value="C:nucleus"/>
    <property type="evidence" value="ECO:0000304"/>
    <property type="project" value="ProtInc"/>
</dbReference>
<dbReference type="GO" id="GO:0016251">
    <property type="term" value="F:RNA polymerase II general transcription initiation factor activity"/>
    <property type="evidence" value="ECO:0000314"/>
    <property type="project" value="GO_Central"/>
</dbReference>
<dbReference type="GO" id="GO:0000995">
    <property type="term" value="F:RNA polymerase III general transcription initiation factor activity"/>
    <property type="evidence" value="ECO:0000314"/>
    <property type="project" value="GO_Central"/>
</dbReference>
<dbReference type="GO" id="GO:0042795">
    <property type="term" value="P:snRNA transcription by RNA polymerase II"/>
    <property type="evidence" value="ECO:0000314"/>
    <property type="project" value="GO_Central"/>
</dbReference>
<dbReference type="GO" id="GO:0042796">
    <property type="term" value="P:snRNA transcription by RNA polymerase III"/>
    <property type="evidence" value="ECO:0000314"/>
    <property type="project" value="GO_Central"/>
</dbReference>
<dbReference type="GO" id="GO:0006384">
    <property type="term" value="P:transcription initiation at RNA polymerase III promoter"/>
    <property type="evidence" value="ECO:0007669"/>
    <property type="project" value="InterPro"/>
</dbReference>
<dbReference type="InterPro" id="IPR029138">
    <property type="entry name" value="SNAPC5"/>
</dbReference>
<dbReference type="PANTHER" id="PTHR15333">
    <property type="entry name" value="SNRNA-ACTIVATING PROTEIN COMPLEX SUBUNIT 5"/>
    <property type="match status" value="1"/>
</dbReference>
<dbReference type="PANTHER" id="PTHR15333:SF2">
    <property type="entry name" value="SNRNA-ACTIVATING PROTEIN COMPLEX SUBUNIT 5"/>
    <property type="match status" value="1"/>
</dbReference>
<dbReference type="Pfam" id="PF15497">
    <property type="entry name" value="SNAPC5"/>
    <property type="match status" value="1"/>
</dbReference>
<protein>
    <recommendedName>
        <fullName>snRNA-activating protein complex subunit 5</fullName>
        <shortName>SNAPc subunit 5</shortName>
    </recommendedName>
    <alternativeName>
        <fullName>Small nuclear RNA-activating complex polypeptide 5</fullName>
    </alternativeName>
    <alternativeName>
        <fullName>snRNA-activating protein complex 19 kDa subunit</fullName>
        <shortName>SNAPc 19 kDa subunit</shortName>
    </alternativeName>
</protein>
<feature type="chain" id="PRO_0000072028" description="snRNA-activating protein complex subunit 5">
    <location>
        <begin position="1"/>
        <end position="98"/>
    </location>
</feature>
<feature type="region of interest" description="Disordered" evidence="1">
    <location>
        <begin position="73"/>
        <end position="98"/>
    </location>
</feature>
<feature type="compositionally biased region" description="Polar residues" evidence="1">
    <location>
        <begin position="73"/>
        <end position="82"/>
    </location>
</feature>
<feature type="compositionally biased region" description="Acidic residues" evidence="1">
    <location>
        <begin position="86"/>
        <end position="98"/>
    </location>
</feature>
<feature type="modified residue" description="Phosphothreonine" evidence="5">
    <location>
        <position position="85"/>
    </location>
</feature>
<feature type="splice variant" id="VSP_012785" description="In isoform 2." evidence="3 4">
    <location>
        <begin position="31"/>
        <end position="60"/>
    </location>
</feature>
<feature type="mutagenesis site" description="Reduced SNAPC4 binding in both the presence or absence of SNAPC1." evidence="2">
    <original>L</original>
    <variation>A</variation>
    <location>
        <position position="8"/>
    </location>
</feature>
<feature type="mutagenesis site" description="Minimal effect on SNAPC4 binding in the absence of SNAPC1. Reduced SNAPC4 binding in the presence of SNAPC1." evidence="2">
    <original>L</original>
    <variation>A</variation>
    <location>
        <position position="18"/>
    </location>
</feature>
<feature type="helix" evidence="6">
    <location>
        <begin position="2"/>
        <end position="44"/>
    </location>
</feature>
<feature type="turn" evidence="6">
    <location>
        <begin position="45"/>
        <end position="49"/>
    </location>
</feature>
<gene>
    <name type="primary">SNAPC5</name>
    <name type="synonym">SNAP19</name>
</gene>